<reference key="1">
    <citation type="journal article" date="1997" name="Nature">
        <title>Molecular basis of symbiosis between Rhizobium and legumes.</title>
        <authorList>
            <person name="Freiberg C.A."/>
            <person name="Fellay R."/>
            <person name="Bairoch A."/>
            <person name="Broughton W.J."/>
            <person name="Rosenthal A."/>
            <person name="Perret X."/>
        </authorList>
    </citation>
    <scope>NUCLEOTIDE SEQUENCE [LARGE SCALE GENOMIC DNA]</scope>
    <source>
        <strain>NBRC 101917 / NGR234</strain>
    </source>
</reference>
<reference key="2">
    <citation type="journal article" date="2009" name="Appl. Environ. Microbiol.">
        <title>Rhizobium sp. strain NGR234 possesses a remarkable number of secretion systems.</title>
        <authorList>
            <person name="Schmeisser C."/>
            <person name="Liesegang H."/>
            <person name="Krysciak D."/>
            <person name="Bakkou N."/>
            <person name="Le Quere A."/>
            <person name="Wollherr A."/>
            <person name="Heinemeyer I."/>
            <person name="Morgenstern B."/>
            <person name="Pommerening-Roeser A."/>
            <person name="Flores M."/>
            <person name="Palacios R."/>
            <person name="Brenner S."/>
            <person name="Gottschalk G."/>
            <person name="Schmitz R.A."/>
            <person name="Broughton W.J."/>
            <person name="Perret X."/>
            <person name="Strittmatter A.W."/>
            <person name="Streit W.R."/>
        </authorList>
    </citation>
    <scope>NUCLEOTIDE SEQUENCE [LARGE SCALE GENOMIC DNA]</scope>
    <source>
        <strain>NBRC 101917 / NGR234</strain>
    </source>
</reference>
<dbReference type="EMBL" id="U00090">
    <property type="protein sequence ID" value="AAB91637.1"/>
    <property type="molecule type" value="Genomic_DNA"/>
</dbReference>
<dbReference type="RefSeq" id="NP_443817.1">
    <property type="nucleotide sequence ID" value="NC_000914.2"/>
</dbReference>
<dbReference type="RefSeq" id="WP_010875419.1">
    <property type="nucleotide sequence ID" value="NC_000914.2"/>
</dbReference>
<dbReference type="PDB" id="2Q0O">
    <property type="method" value="X-ray"/>
    <property type="resolution" value="2.00 A"/>
    <property type="chains" value="A/B=1-236"/>
</dbReference>
<dbReference type="PDBsum" id="2Q0O"/>
<dbReference type="SMR" id="P55407"/>
<dbReference type="DIP" id="DIP-46219N"/>
<dbReference type="IntAct" id="P55407">
    <property type="interactions" value="1"/>
</dbReference>
<dbReference type="DrugBank" id="DB08081">
    <property type="generic name" value="3-OXO-OCTANOIC ACID (2-OXO-TETRAHYDRO-FURAN-3-YL)-AMIDE"/>
</dbReference>
<dbReference type="KEGG" id="rhi:NGR_a04090"/>
<dbReference type="PATRIC" id="fig|394.7.peg.430"/>
<dbReference type="eggNOG" id="COG2771">
    <property type="taxonomic scope" value="Bacteria"/>
</dbReference>
<dbReference type="HOGENOM" id="CLU_072786_5_1_5"/>
<dbReference type="OrthoDB" id="9803630at2"/>
<dbReference type="EvolutionaryTrace" id="P55407"/>
<dbReference type="Proteomes" id="UP000001054">
    <property type="component" value="Plasmid pNGR234a"/>
</dbReference>
<dbReference type="GO" id="GO:0003677">
    <property type="term" value="F:DNA binding"/>
    <property type="evidence" value="ECO:0007669"/>
    <property type="project" value="UniProtKB-KW"/>
</dbReference>
<dbReference type="GO" id="GO:0009372">
    <property type="term" value="P:quorum sensing"/>
    <property type="evidence" value="ECO:0007669"/>
    <property type="project" value="UniProtKB-KW"/>
</dbReference>
<dbReference type="GO" id="GO:0006355">
    <property type="term" value="P:regulation of DNA-templated transcription"/>
    <property type="evidence" value="ECO:0007669"/>
    <property type="project" value="InterPro"/>
</dbReference>
<dbReference type="CDD" id="cd06170">
    <property type="entry name" value="LuxR_C_like"/>
    <property type="match status" value="1"/>
</dbReference>
<dbReference type="Gene3D" id="3.30.450.80">
    <property type="entry name" value="Transcription factor LuxR-like, autoinducer-binding domain"/>
    <property type="match status" value="1"/>
</dbReference>
<dbReference type="Gene3D" id="1.10.10.10">
    <property type="entry name" value="Winged helix-like DNA-binding domain superfamily/Winged helix DNA-binding domain"/>
    <property type="match status" value="1"/>
</dbReference>
<dbReference type="InterPro" id="IPR016032">
    <property type="entry name" value="Sig_transdc_resp-reg_C-effctor"/>
</dbReference>
<dbReference type="InterPro" id="IPR005143">
    <property type="entry name" value="TF_LuxR_autoind-bd_dom"/>
</dbReference>
<dbReference type="InterPro" id="IPR036693">
    <property type="entry name" value="TF_LuxR_autoind-bd_dom_sf"/>
</dbReference>
<dbReference type="InterPro" id="IPR000792">
    <property type="entry name" value="Tscrpt_reg_LuxR_C"/>
</dbReference>
<dbReference type="InterPro" id="IPR036388">
    <property type="entry name" value="WH-like_DNA-bd_sf"/>
</dbReference>
<dbReference type="Pfam" id="PF03472">
    <property type="entry name" value="Autoind_bind"/>
    <property type="match status" value="1"/>
</dbReference>
<dbReference type="Pfam" id="PF00196">
    <property type="entry name" value="GerE"/>
    <property type="match status" value="1"/>
</dbReference>
<dbReference type="SMART" id="SM00421">
    <property type="entry name" value="HTH_LUXR"/>
    <property type="match status" value="1"/>
</dbReference>
<dbReference type="SUPFAM" id="SSF46894">
    <property type="entry name" value="C-terminal effector domain of the bipartite response regulators"/>
    <property type="match status" value="1"/>
</dbReference>
<dbReference type="SUPFAM" id="SSF75516">
    <property type="entry name" value="Pheromone-binding domain of LuxR-like quorum-sensing transcription factors"/>
    <property type="match status" value="1"/>
</dbReference>
<dbReference type="PROSITE" id="PS50043">
    <property type="entry name" value="HTH_LUXR_2"/>
    <property type="match status" value="1"/>
</dbReference>
<sequence>MSVNGNLRSLIDMLEAAQDGHMIKIALRSFAHSCGYDRFAYLQKDGTQVRTFHSYPGPWESIYLGSDYFNIDPVLAEAKRRRDVFFWTADAWPARGSSPLRRFRDEAISHGIRCGVTIPVEGSYGSAMMLTFASPERKVDISGVLDPKKAVQLLMMVHYQLKIIAAKTVLNPKQMLSPREMLCLVWASKGKTASVTANLTGINARTVQHYLDKARAKLDAESVPQLVAIAKDRGLV</sequence>
<gene>
    <name type="primary">traR</name>
    <name type="ordered locus">NGR_a04090</name>
    <name type="ORF">y4dH</name>
</gene>
<feature type="chain" id="PRO_0000184194" description="Probable transcriptional activator protein TraR">
    <location>
        <begin position="1"/>
        <end position="236"/>
    </location>
</feature>
<feature type="domain" description="HTH luxR-type" evidence="2">
    <location>
        <begin position="169"/>
        <end position="234"/>
    </location>
</feature>
<feature type="DNA-binding region" description="H-T-H motif" evidence="2">
    <location>
        <begin position="193"/>
        <end position="212"/>
    </location>
</feature>
<feature type="helix" evidence="4">
    <location>
        <begin position="3"/>
        <end position="16"/>
    </location>
</feature>
<feature type="helix" evidence="4">
    <location>
        <begin position="20"/>
        <end position="34"/>
    </location>
</feature>
<feature type="strand" evidence="4">
    <location>
        <begin position="38"/>
        <end position="45"/>
    </location>
</feature>
<feature type="strand" evidence="4">
    <location>
        <begin position="48"/>
        <end position="53"/>
    </location>
</feature>
<feature type="helix" evidence="4">
    <location>
        <begin position="57"/>
        <end position="65"/>
    </location>
</feature>
<feature type="helix" evidence="4">
    <location>
        <begin position="68"/>
        <end position="70"/>
    </location>
</feature>
<feature type="helix" evidence="4">
    <location>
        <begin position="73"/>
        <end position="80"/>
    </location>
</feature>
<feature type="strand" evidence="4">
    <location>
        <begin position="85"/>
        <end position="89"/>
    </location>
</feature>
<feature type="helix" evidence="4">
    <location>
        <begin position="99"/>
        <end position="109"/>
    </location>
</feature>
<feature type="strand" evidence="4">
    <location>
        <begin position="114"/>
        <end position="121"/>
    </location>
</feature>
<feature type="helix" evidence="4">
    <location>
        <begin position="123"/>
        <end position="125"/>
    </location>
</feature>
<feature type="strand" evidence="4">
    <location>
        <begin position="127"/>
        <end position="137"/>
    </location>
</feature>
<feature type="turn" evidence="4">
    <location>
        <begin position="142"/>
        <end position="144"/>
    </location>
</feature>
<feature type="helix" evidence="4">
    <location>
        <begin position="147"/>
        <end position="166"/>
    </location>
</feature>
<feature type="helix" evidence="4">
    <location>
        <begin position="172"/>
        <end position="174"/>
    </location>
</feature>
<feature type="helix" evidence="4">
    <location>
        <begin position="178"/>
        <end position="188"/>
    </location>
</feature>
<feature type="helix" evidence="4">
    <location>
        <begin position="193"/>
        <end position="200"/>
    </location>
</feature>
<feature type="helix" evidence="4">
    <location>
        <begin position="204"/>
        <end position="218"/>
    </location>
</feature>
<feature type="helix" evidence="4">
    <location>
        <begin position="223"/>
        <end position="232"/>
    </location>
</feature>
<proteinExistence type="evidence at protein level"/>
<evidence type="ECO:0000250" key="1"/>
<evidence type="ECO:0000255" key="2">
    <source>
        <dbReference type="PROSITE-ProRule" id="PRU00411"/>
    </source>
</evidence>
<evidence type="ECO:0000305" key="3"/>
<evidence type="ECO:0007829" key="4">
    <source>
        <dbReference type="PDB" id="2Q0O"/>
    </source>
</evidence>
<organism>
    <name type="scientific">Sinorhizobium fredii (strain NBRC 101917 / NGR234)</name>
    <dbReference type="NCBI Taxonomy" id="394"/>
    <lineage>
        <taxon>Bacteria</taxon>
        <taxon>Pseudomonadati</taxon>
        <taxon>Pseudomonadota</taxon>
        <taxon>Alphaproteobacteria</taxon>
        <taxon>Hyphomicrobiales</taxon>
        <taxon>Rhizobiaceae</taxon>
        <taxon>Sinorhizobium/Ensifer group</taxon>
        <taxon>Sinorhizobium</taxon>
    </lineage>
</organism>
<geneLocation type="plasmid">
    <name>sym pNGR234a</name>
</geneLocation>
<keyword id="KW-0002">3D-structure</keyword>
<keyword id="KW-0010">Activator</keyword>
<keyword id="KW-0184">Conjugation</keyword>
<keyword id="KW-0238">DNA-binding</keyword>
<keyword id="KW-0614">Plasmid</keyword>
<keyword id="KW-0673">Quorum sensing</keyword>
<keyword id="KW-1185">Reference proteome</keyword>
<keyword id="KW-0804">Transcription</keyword>
<keyword id="KW-0805">Transcription regulation</keyword>
<accession>P55407</accession>
<protein>
    <recommendedName>
        <fullName>Probable transcriptional activator protein TraR</fullName>
    </recommendedName>
</protein>
<comment type="function">
    <text evidence="1">Positive regulation of conjugal transfer. TraR activates target genes in the presence of AAI and also activates traR and traI themselves (By similarity).</text>
</comment>
<comment type="interaction">
    <interactant intactId="EBI-9014218">
        <id>P55407</id>
    </interactant>
    <interactant intactId="EBI-9014222">
        <id>P55408</id>
        <label>traM</label>
    </interactant>
    <organismsDiffer>false</organismsDiffer>
    <experiments>3</experiments>
</comment>
<comment type="similarity">
    <text evidence="3">Belongs to the autoinducer-regulated transcriptional regulatory protein family.</text>
</comment>
<name>TRAR_SINFN</name>